<proteinExistence type="evidence at protein level"/>
<reference key="1">
    <citation type="journal article" date="1991" name="J. Bacteriol.">
        <title>Nucleotide sequence and functions of mrk determinants necessary for expression of type 3 fimbriae in Klebsiella pneumoniae.</title>
        <authorList>
            <person name="Allen B.L."/>
            <person name="Gerlach G.-F."/>
            <person name="Clegg S."/>
        </authorList>
    </citation>
    <scope>NUCLEOTIDE SEQUENCE [GENOMIC DNA]</scope>
    <source>
        <strain>IA565</strain>
    </source>
</reference>
<reference key="2">
    <citation type="journal article" date="1989" name="J. Bacteriol.">
        <title>Identification and characterization of the genes encoding the type 3 and type 1 fimbrial adhesins of Klebsiella pneumoniae.</title>
        <authorList>
            <person name="Gerlach G.-F."/>
            <person name="Clegg S."/>
            <person name="Allen B.L."/>
        </authorList>
    </citation>
    <scope>NUCLEOTIDE SEQUENCE [GENOMIC DNA]</scope>
</reference>
<accession>P21648</accession>
<organism>
    <name type="scientific">Klebsiella pneumoniae</name>
    <dbReference type="NCBI Taxonomy" id="573"/>
    <lineage>
        <taxon>Bacteria</taxon>
        <taxon>Pseudomonadati</taxon>
        <taxon>Pseudomonadota</taxon>
        <taxon>Gammaproteobacteria</taxon>
        <taxon>Enterobacterales</taxon>
        <taxon>Enterobacteriaceae</taxon>
        <taxon>Klebsiella/Raoultella group</taxon>
        <taxon>Klebsiella</taxon>
        <taxon>Klebsiella pneumoniae complex</taxon>
    </lineage>
</organism>
<sequence length="321" mass="33970">MKKLTLFIGLMALGTTSAWASCWQSNSAYEINMAMGRVVVSPDLPVGSVIATKTWTMPDNNTIYVTCDRNTTLKSDAKVVAAGLVQGANKVYSTAIPGIGLRFSRKGAISMIYPDSYTTTGSSFRLVGSTFTLDIIKTSTTTGSGTLASGPYTEYGPGFTILKTSLNADAITIVSPSCTILGGKNMNVDIGTIKRADLKGVGTWAGGTPFDIKLECSGGVSVSGYANINTSFSGTLATNTSANQGVLLNEKTGNSAAKGVGVQVIKDNTPLEFNKKHNIGTLQSQETRYITLPLHARFYQYAPTTSTGEVESHLVFNLTYD</sequence>
<evidence type="ECO:0000255" key="1">
    <source>
        <dbReference type="PROSITE-ProRule" id="PRU00303"/>
    </source>
</evidence>
<evidence type="ECO:0000305" key="2"/>
<evidence type="ECO:0007829" key="3">
    <source>
        <dbReference type="PDB" id="3U4K"/>
    </source>
</evidence>
<comment type="subcellular location">
    <subcellularLocation>
        <location>Fimbrium</location>
    </subcellularLocation>
</comment>
<comment type="similarity">
    <text evidence="2">Belongs to the fimbrial protein family.</text>
</comment>
<gene>
    <name type="primary">mrkD</name>
</gene>
<dbReference type="EMBL" id="M55912">
    <property type="protein sequence ID" value="AAA25096.1"/>
    <property type="molecule type" value="Genomic_DNA"/>
</dbReference>
<dbReference type="EMBL" id="M24536">
    <property type="protein sequence ID" value="AAA25098.1"/>
    <property type="molecule type" value="Genomic_DNA"/>
</dbReference>
<dbReference type="PIR" id="B32801">
    <property type="entry name" value="B32801"/>
</dbReference>
<dbReference type="PDB" id="3U4K">
    <property type="method" value="X-ray"/>
    <property type="resolution" value="3.00 A"/>
    <property type="chains" value="A=21-181"/>
</dbReference>
<dbReference type="PDBsum" id="3U4K"/>
<dbReference type="SMR" id="P21648"/>
<dbReference type="EvolutionaryTrace" id="P21648"/>
<dbReference type="GO" id="GO:0009289">
    <property type="term" value="C:pilus"/>
    <property type="evidence" value="ECO:0007669"/>
    <property type="project" value="UniProtKB-SubCell"/>
</dbReference>
<dbReference type="GO" id="GO:0043709">
    <property type="term" value="P:cell adhesion involved in single-species biofilm formation"/>
    <property type="evidence" value="ECO:0007669"/>
    <property type="project" value="TreeGrafter"/>
</dbReference>
<dbReference type="Gene3D" id="2.60.40.3310">
    <property type="match status" value="1"/>
</dbReference>
<dbReference type="Gene3D" id="2.60.40.1090">
    <property type="entry name" value="Fimbrial-type adhesion domain"/>
    <property type="match status" value="1"/>
</dbReference>
<dbReference type="InterPro" id="IPR000259">
    <property type="entry name" value="Adhesion_dom_fimbrial"/>
</dbReference>
<dbReference type="InterPro" id="IPR036937">
    <property type="entry name" value="Adhesion_dom_fimbrial_sf"/>
</dbReference>
<dbReference type="InterPro" id="IPR008966">
    <property type="entry name" value="Adhesion_dom_sf"/>
</dbReference>
<dbReference type="InterPro" id="IPR050263">
    <property type="entry name" value="Bact_Fimbrial_Adh_Pro"/>
</dbReference>
<dbReference type="InterPro" id="IPR054160">
    <property type="entry name" value="MrkD_recept-bd"/>
</dbReference>
<dbReference type="PANTHER" id="PTHR33420:SF3">
    <property type="entry name" value="FIMBRIAL SUBUNIT ELFA"/>
    <property type="match status" value="1"/>
</dbReference>
<dbReference type="PANTHER" id="PTHR33420">
    <property type="entry name" value="FIMBRIAL SUBUNIT ELFA-RELATED"/>
    <property type="match status" value="1"/>
</dbReference>
<dbReference type="Pfam" id="PF00419">
    <property type="entry name" value="Fimbrial"/>
    <property type="match status" value="1"/>
</dbReference>
<dbReference type="Pfam" id="PF22003">
    <property type="entry name" value="MrkDrd"/>
    <property type="match status" value="1"/>
</dbReference>
<dbReference type="SUPFAM" id="SSF49401">
    <property type="entry name" value="Bacterial adhesins"/>
    <property type="match status" value="1"/>
</dbReference>
<dbReference type="PROSITE" id="PS51257">
    <property type="entry name" value="PROKAR_LIPOPROTEIN"/>
    <property type="match status" value="1"/>
</dbReference>
<keyword id="KW-0002">3D-structure</keyword>
<keyword id="KW-0281">Fimbrium</keyword>
<keyword id="KW-0732">Signal</keyword>
<protein>
    <recommendedName>
        <fullName>Fimbria adhesin protein</fullName>
    </recommendedName>
</protein>
<feature type="signal peptide" evidence="1">
    <location>
        <begin position="1"/>
        <end position="18"/>
    </location>
</feature>
<feature type="chain" id="PRO_0000009230" description="Fimbria adhesin protein">
    <location>
        <begin position="19"/>
        <end position="321"/>
    </location>
</feature>
<feature type="sequence conflict" description="In Ref. 2." evidence="2" ref="2">
    <original>Y</original>
    <variation>V</variation>
    <location>
        <position position="113"/>
    </location>
</feature>
<feature type="strand" evidence="3">
    <location>
        <begin position="22"/>
        <end position="26"/>
    </location>
</feature>
<feature type="strand" evidence="3">
    <location>
        <begin position="29"/>
        <end position="32"/>
    </location>
</feature>
<feature type="strand" evidence="3">
    <location>
        <begin position="36"/>
        <end position="39"/>
    </location>
</feature>
<feature type="strand" evidence="3">
    <location>
        <begin position="48"/>
        <end position="57"/>
    </location>
</feature>
<feature type="strand" evidence="3">
    <location>
        <begin position="63"/>
        <end position="79"/>
    </location>
</feature>
<feature type="helix" evidence="3">
    <location>
        <begin position="88"/>
        <end position="90"/>
    </location>
</feature>
<feature type="strand" evidence="3">
    <location>
        <begin position="99"/>
        <end position="109"/>
    </location>
</feature>
<feature type="strand" evidence="3">
    <location>
        <begin position="111"/>
        <end position="125"/>
    </location>
</feature>
<feature type="strand" evidence="3">
    <location>
        <begin position="129"/>
        <end position="137"/>
    </location>
</feature>
<feature type="strand" evidence="3">
    <location>
        <begin position="139"/>
        <end position="141"/>
    </location>
</feature>
<feature type="strand" evidence="3">
    <location>
        <begin position="149"/>
        <end position="159"/>
    </location>
</feature>
<feature type="strand" evidence="3">
    <location>
        <begin position="161"/>
        <end position="166"/>
    </location>
</feature>
<feature type="strand" evidence="3">
    <location>
        <begin position="168"/>
        <end position="174"/>
    </location>
</feature>
<name>MRKD_KLEPN</name>